<proteinExistence type="inferred from homology"/>
<organism>
    <name type="scientific">Burkholderia orbicola (strain AU 1054)</name>
    <dbReference type="NCBI Taxonomy" id="331271"/>
    <lineage>
        <taxon>Bacteria</taxon>
        <taxon>Pseudomonadati</taxon>
        <taxon>Pseudomonadota</taxon>
        <taxon>Betaproteobacteria</taxon>
        <taxon>Burkholderiales</taxon>
        <taxon>Burkholderiaceae</taxon>
        <taxon>Burkholderia</taxon>
        <taxon>Burkholderia cepacia complex</taxon>
        <taxon>Burkholderia orbicola</taxon>
    </lineage>
</organism>
<protein>
    <recommendedName>
        <fullName evidence="1">Macrolide export ATP-binding/permease protein MacB</fullName>
        <ecNumber evidence="1">7.6.2.-</ecNumber>
    </recommendedName>
</protein>
<evidence type="ECO:0000255" key="1">
    <source>
        <dbReference type="HAMAP-Rule" id="MF_01720"/>
    </source>
</evidence>
<evidence type="ECO:0000256" key="2">
    <source>
        <dbReference type="SAM" id="MobiDB-lite"/>
    </source>
</evidence>
<evidence type="ECO:0000305" key="3"/>
<name>MACB_BURO1</name>
<sequence>MRQPLLKLAAVTRRFPAGDKDVVVLNNVNLSIGAGEIVAIVGASGSGKSTLMNILGCLDHPSEGTYTVGGRDTHMLDSDELAQLRREHFGFVFQRYHLLPHVDAVANLEMPAIYAGTPRADRHARARELLARLGLADRAHHRPGQLSGGQQQRVSIARALMNGGQVILADEPTGALDTKSGQDVIRILHELNALGHTIVIVTHDKAVARHARRIIEISDGEIVADRPNRHYAEAFAEVGVGAAATTETAADTRSAPASGDAPPPANNDTAADPAPAPDASPPAPAVSPKHAGWRGSRSCRTGCARCLTMLGIIIGITSVVSIVAVGEGAKRYMLEEIGSIGTNTISLYPGSDWGDSRADTIQTLVPADVAALAEQPYVDSATPETSRTLLLRYRNVDVHALVSGVGDSYFQTRGMRFALGVPFDDDAVRRQAQVAVIDQNTRRKLFGATRNPVGEAILVDNVPCVVIGVTADKKSAFGSVKSLNVWVPYTTASGRLFGQRYLDSITVRVRDGQPSAAAEKSLEKLMIQRHGRKDFFTYNMDSVVKTVEKTGQSLTLLLSLIAVISLVVGGIGVMNIMLVSVTERTREIGIRMAVGARQSDILQQFLVEAVLVCLLGGTIGIALSFGLGALFSVFVAQWKMVFSAGAIVTAFVCSTLTGVIFGFMPARNASRLDPIDALARD</sequence>
<comment type="function">
    <text evidence="1">Non-canonical ABC transporter that contains transmembrane domains (TMD), which form a pore in the inner membrane, and an ATP-binding domain (NBD), which is responsible for energy generation. Confers resistance against macrolides.</text>
</comment>
<comment type="subunit">
    <text evidence="1">Homodimer.</text>
</comment>
<comment type="subcellular location">
    <subcellularLocation>
        <location evidence="1">Cell inner membrane</location>
        <topology evidence="1">Multi-pass membrane protein</topology>
    </subcellularLocation>
</comment>
<comment type="similarity">
    <text evidence="1">Belongs to the ABC transporter superfamily. Macrolide exporter (TC 3.A.1.122) family.</text>
</comment>
<comment type="sequence caution" evidence="3">
    <conflict type="frameshift">
        <sequence resource="EMBL-CDS" id="ABF78308"/>
    </conflict>
    <text>Produces two separate ORFs.</text>
</comment>
<comment type="sequence caution" evidence="3">
    <conflict type="frameshift">
        <sequence resource="EMBL-CDS" id="ABF78309"/>
    </conflict>
    <text>Produces two separate ORFs.</text>
</comment>
<accession>Q1BPZ6</accession>
<accession>Q1BPZ7</accession>
<gene>
    <name evidence="1" type="primary">macB</name>
    <name type="ordered locus">Bcen_3413/Bcen_3414</name>
</gene>
<dbReference type="EC" id="7.6.2.-" evidence="1"/>
<dbReference type="EMBL" id="CP000379">
    <property type="protein sequence ID" value="ABF78308.1"/>
    <property type="status" value="ALT_SEQ"/>
    <property type="molecule type" value="Genomic_DNA"/>
</dbReference>
<dbReference type="EMBL" id="CP000379">
    <property type="protein sequence ID" value="ABF78309.1"/>
    <property type="status" value="ALT_FRAME"/>
    <property type="molecule type" value="Genomic_DNA"/>
</dbReference>
<dbReference type="SMR" id="Q1BPZ6"/>
<dbReference type="HOGENOM" id="CLU_000604_8_0_4"/>
<dbReference type="GO" id="GO:0005886">
    <property type="term" value="C:plasma membrane"/>
    <property type="evidence" value="ECO:0007669"/>
    <property type="project" value="UniProtKB-SubCell"/>
</dbReference>
<dbReference type="GO" id="GO:0005524">
    <property type="term" value="F:ATP binding"/>
    <property type="evidence" value="ECO:0007669"/>
    <property type="project" value="UniProtKB-KW"/>
</dbReference>
<dbReference type="GO" id="GO:0016887">
    <property type="term" value="F:ATP hydrolysis activity"/>
    <property type="evidence" value="ECO:0007669"/>
    <property type="project" value="InterPro"/>
</dbReference>
<dbReference type="GO" id="GO:0022857">
    <property type="term" value="F:transmembrane transporter activity"/>
    <property type="evidence" value="ECO:0007669"/>
    <property type="project" value="TreeGrafter"/>
</dbReference>
<dbReference type="GO" id="GO:0046677">
    <property type="term" value="P:response to antibiotic"/>
    <property type="evidence" value="ECO:0007669"/>
    <property type="project" value="UniProtKB-KW"/>
</dbReference>
<dbReference type="CDD" id="cd03255">
    <property type="entry name" value="ABC_MJ0796_LolCDE_FtsE"/>
    <property type="match status" value="1"/>
</dbReference>
<dbReference type="FunFam" id="3.40.50.300:FF:000032">
    <property type="entry name" value="Export ABC transporter ATP-binding protein"/>
    <property type="match status" value="1"/>
</dbReference>
<dbReference type="Gene3D" id="3.40.50.300">
    <property type="entry name" value="P-loop containing nucleotide triphosphate hydrolases"/>
    <property type="match status" value="1"/>
</dbReference>
<dbReference type="InterPro" id="IPR003593">
    <property type="entry name" value="AAA+_ATPase"/>
</dbReference>
<dbReference type="InterPro" id="IPR003838">
    <property type="entry name" value="ABC3_permease_C"/>
</dbReference>
<dbReference type="InterPro" id="IPR003439">
    <property type="entry name" value="ABC_transporter-like_ATP-bd"/>
</dbReference>
<dbReference type="InterPro" id="IPR017871">
    <property type="entry name" value="ABC_transporter-like_CS"/>
</dbReference>
<dbReference type="InterPro" id="IPR017911">
    <property type="entry name" value="MacB-like_ATP-bd"/>
</dbReference>
<dbReference type="InterPro" id="IPR025857">
    <property type="entry name" value="MacB_PCD"/>
</dbReference>
<dbReference type="InterPro" id="IPR050250">
    <property type="entry name" value="Macrolide_Exporter_MacB"/>
</dbReference>
<dbReference type="InterPro" id="IPR027417">
    <property type="entry name" value="P-loop_NTPase"/>
</dbReference>
<dbReference type="PANTHER" id="PTHR30572:SF7">
    <property type="entry name" value="MACROLIDE EXPORT ATP-BINDING_PERMEASE PROTEIN MACB"/>
    <property type="match status" value="1"/>
</dbReference>
<dbReference type="PANTHER" id="PTHR30572">
    <property type="entry name" value="MEMBRANE COMPONENT OF TRANSPORTER-RELATED"/>
    <property type="match status" value="1"/>
</dbReference>
<dbReference type="Pfam" id="PF00005">
    <property type="entry name" value="ABC_tran"/>
    <property type="match status" value="1"/>
</dbReference>
<dbReference type="Pfam" id="PF02687">
    <property type="entry name" value="FtsX"/>
    <property type="match status" value="1"/>
</dbReference>
<dbReference type="Pfam" id="PF12704">
    <property type="entry name" value="MacB_PCD"/>
    <property type="match status" value="1"/>
</dbReference>
<dbReference type="SMART" id="SM00382">
    <property type="entry name" value="AAA"/>
    <property type="match status" value="1"/>
</dbReference>
<dbReference type="SUPFAM" id="SSF52540">
    <property type="entry name" value="P-loop containing nucleoside triphosphate hydrolases"/>
    <property type="match status" value="1"/>
</dbReference>
<dbReference type="PROSITE" id="PS00211">
    <property type="entry name" value="ABC_TRANSPORTER_1"/>
    <property type="match status" value="1"/>
</dbReference>
<dbReference type="PROSITE" id="PS50893">
    <property type="entry name" value="ABC_TRANSPORTER_2"/>
    <property type="match status" value="1"/>
</dbReference>
<dbReference type="PROSITE" id="PS51267">
    <property type="entry name" value="MACB"/>
    <property type="match status" value="1"/>
</dbReference>
<reference key="1">
    <citation type="submission" date="2006-05" db="EMBL/GenBank/DDBJ databases">
        <title>Complete sequence of chromosome 2 of Burkholderia cenocepacia AU 1054.</title>
        <authorList>
            <consortium name="US DOE Joint Genome Institute"/>
            <person name="Copeland A."/>
            <person name="Lucas S."/>
            <person name="Lapidus A."/>
            <person name="Barry K."/>
            <person name="Detter J.C."/>
            <person name="Glavina del Rio T."/>
            <person name="Hammon N."/>
            <person name="Israni S."/>
            <person name="Dalin E."/>
            <person name="Tice H."/>
            <person name="Pitluck S."/>
            <person name="Chain P."/>
            <person name="Malfatti S."/>
            <person name="Shin M."/>
            <person name="Vergez L."/>
            <person name="Schmutz J."/>
            <person name="Larimer F."/>
            <person name="Land M."/>
            <person name="Hauser L."/>
            <person name="Kyrpides N."/>
            <person name="Lykidis A."/>
            <person name="LiPuma J.J."/>
            <person name="Konstantinidis K."/>
            <person name="Tiedje J.M."/>
            <person name="Richardson P."/>
        </authorList>
    </citation>
    <scope>NUCLEOTIDE SEQUENCE [LARGE SCALE GENOMIC DNA]</scope>
    <source>
        <strain>AU 1054</strain>
    </source>
</reference>
<keyword id="KW-0046">Antibiotic resistance</keyword>
<keyword id="KW-0067">ATP-binding</keyword>
<keyword id="KW-0997">Cell inner membrane</keyword>
<keyword id="KW-1003">Cell membrane</keyword>
<keyword id="KW-0472">Membrane</keyword>
<keyword id="KW-0547">Nucleotide-binding</keyword>
<keyword id="KW-1278">Translocase</keyword>
<keyword id="KW-0812">Transmembrane</keyword>
<keyword id="KW-1133">Transmembrane helix</keyword>
<keyword id="KW-0813">Transport</keyword>
<feature type="chain" id="PRO_0000269928" description="Macrolide export ATP-binding/permease protein MacB">
    <location>
        <begin position="1"/>
        <end position="681"/>
    </location>
</feature>
<feature type="transmembrane region" description="Helical" evidence="1">
    <location>
        <begin position="306"/>
        <end position="326"/>
    </location>
</feature>
<feature type="transmembrane region" description="Helical" evidence="1">
    <location>
        <begin position="554"/>
        <end position="574"/>
    </location>
</feature>
<feature type="transmembrane region" description="Helical" evidence="1">
    <location>
        <begin position="611"/>
        <end position="631"/>
    </location>
</feature>
<feature type="transmembrane region" description="Helical" evidence="1">
    <location>
        <begin position="644"/>
        <end position="664"/>
    </location>
</feature>
<feature type="domain" description="ABC transporter" evidence="1">
    <location>
        <begin position="6"/>
        <end position="244"/>
    </location>
</feature>
<feature type="region of interest" description="Disordered" evidence="2">
    <location>
        <begin position="246"/>
        <end position="298"/>
    </location>
</feature>
<feature type="compositionally biased region" description="Low complexity" evidence="2">
    <location>
        <begin position="246"/>
        <end position="273"/>
    </location>
</feature>
<feature type="compositionally biased region" description="Pro residues" evidence="2">
    <location>
        <begin position="274"/>
        <end position="285"/>
    </location>
</feature>
<feature type="binding site" evidence="1">
    <location>
        <begin position="42"/>
        <end position="49"/>
    </location>
    <ligand>
        <name>ATP</name>
        <dbReference type="ChEBI" id="CHEBI:30616"/>
    </ligand>
</feature>